<evidence type="ECO:0000255" key="1">
    <source>
        <dbReference type="HAMAP-Rule" id="MF_00637"/>
    </source>
</evidence>
<name>SP2AB_CLOB8</name>
<proteinExistence type="inferred from homology"/>
<dbReference type="EC" id="2.7.11.1" evidence="1"/>
<dbReference type="EMBL" id="CP000721">
    <property type="protein sequence ID" value="ABR32997.1"/>
    <property type="molecule type" value="Genomic_DNA"/>
</dbReference>
<dbReference type="RefSeq" id="WP_011968157.1">
    <property type="nucleotide sequence ID" value="NC_009617.1"/>
</dbReference>
<dbReference type="SMR" id="A6LRL7"/>
<dbReference type="GeneID" id="66343754"/>
<dbReference type="KEGG" id="cbe:Cbei_0813"/>
<dbReference type="eggNOG" id="COG2172">
    <property type="taxonomic scope" value="Bacteria"/>
</dbReference>
<dbReference type="HOGENOM" id="CLU_090336_11_0_9"/>
<dbReference type="Proteomes" id="UP000000565">
    <property type="component" value="Chromosome"/>
</dbReference>
<dbReference type="GO" id="GO:0005524">
    <property type="term" value="F:ATP binding"/>
    <property type="evidence" value="ECO:0007669"/>
    <property type="project" value="UniProtKB-KW"/>
</dbReference>
<dbReference type="GO" id="GO:0106310">
    <property type="term" value="F:protein serine kinase activity"/>
    <property type="evidence" value="ECO:0007669"/>
    <property type="project" value="RHEA"/>
</dbReference>
<dbReference type="GO" id="GO:0004674">
    <property type="term" value="F:protein serine/threonine kinase activity"/>
    <property type="evidence" value="ECO:0007669"/>
    <property type="project" value="UniProtKB-KW"/>
</dbReference>
<dbReference type="GO" id="GO:0016989">
    <property type="term" value="F:sigma factor antagonist activity"/>
    <property type="evidence" value="ECO:0007669"/>
    <property type="project" value="InterPro"/>
</dbReference>
<dbReference type="GO" id="GO:0030436">
    <property type="term" value="P:asexual sporulation"/>
    <property type="evidence" value="ECO:0007669"/>
    <property type="project" value="UniProtKB-UniRule"/>
</dbReference>
<dbReference type="GO" id="GO:0042174">
    <property type="term" value="P:negative regulation of sporulation resulting in formation of a cellular spore"/>
    <property type="evidence" value="ECO:0007669"/>
    <property type="project" value="InterPro"/>
</dbReference>
<dbReference type="GO" id="GO:0030435">
    <property type="term" value="P:sporulation resulting in formation of a cellular spore"/>
    <property type="evidence" value="ECO:0007669"/>
    <property type="project" value="UniProtKB-KW"/>
</dbReference>
<dbReference type="Gene3D" id="3.30.565.10">
    <property type="entry name" value="Histidine kinase-like ATPase, C-terminal domain"/>
    <property type="match status" value="1"/>
</dbReference>
<dbReference type="HAMAP" id="MF_00637">
    <property type="entry name" value="Anti_sigma_F"/>
    <property type="match status" value="1"/>
</dbReference>
<dbReference type="InterPro" id="IPR050267">
    <property type="entry name" value="Anti-sigma-factor_SerPK"/>
</dbReference>
<dbReference type="InterPro" id="IPR010194">
    <property type="entry name" value="Anti-sigma_F"/>
</dbReference>
<dbReference type="InterPro" id="IPR036890">
    <property type="entry name" value="HATPase_C_sf"/>
</dbReference>
<dbReference type="NCBIfam" id="TIGR01925">
    <property type="entry name" value="spIIAB"/>
    <property type="match status" value="1"/>
</dbReference>
<dbReference type="PANTHER" id="PTHR35526:SF3">
    <property type="entry name" value="ANTI-SIGMA-F FACTOR RSBW"/>
    <property type="match status" value="1"/>
</dbReference>
<dbReference type="PANTHER" id="PTHR35526">
    <property type="entry name" value="ANTI-SIGMA-F FACTOR RSBW-RELATED"/>
    <property type="match status" value="1"/>
</dbReference>
<dbReference type="Pfam" id="PF13581">
    <property type="entry name" value="HATPase_c_2"/>
    <property type="match status" value="1"/>
</dbReference>
<dbReference type="SMART" id="SM00387">
    <property type="entry name" value="HATPase_c"/>
    <property type="match status" value="1"/>
</dbReference>
<dbReference type="SUPFAM" id="SSF55874">
    <property type="entry name" value="ATPase domain of HSP90 chaperone/DNA topoisomerase II/histidine kinase"/>
    <property type="match status" value="1"/>
</dbReference>
<gene>
    <name evidence="1" type="primary">spoIIAB</name>
    <name type="ordered locus">Cbei_0813</name>
</gene>
<organism>
    <name type="scientific">Clostridium beijerinckii (strain ATCC 51743 / NCIMB 8052)</name>
    <name type="common">Clostridium acetobutylicum</name>
    <dbReference type="NCBI Taxonomy" id="290402"/>
    <lineage>
        <taxon>Bacteria</taxon>
        <taxon>Bacillati</taxon>
        <taxon>Bacillota</taxon>
        <taxon>Clostridia</taxon>
        <taxon>Eubacteriales</taxon>
        <taxon>Clostridiaceae</taxon>
        <taxon>Clostridium</taxon>
    </lineage>
</organism>
<reference key="1">
    <citation type="submission" date="2007-06" db="EMBL/GenBank/DDBJ databases">
        <title>Complete sequence of Clostridium beijerinckii NCIMB 8052.</title>
        <authorList>
            <consortium name="US DOE Joint Genome Institute"/>
            <person name="Copeland A."/>
            <person name="Lucas S."/>
            <person name="Lapidus A."/>
            <person name="Barry K."/>
            <person name="Detter J.C."/>
            <person name="Glavina del Rio T."/>
            <person name="Hammon N."/>
            <person name="Israni S."/>
            <person name="Dalin E."/>
            <person name="Tice H."/>
            <person name="Pitluck S."/>
            <person name="Sims D."/>
            <person name="Brettin T."/>
            <person name="Bruce D."/>
            <person name="Tapia R."/>
            <person name="Brainard J."/>
            <person name="Schmutz J."/>
            <person name="Larimer F."/>
            <person name="Land M."/>
            <person name="Hauser L."/>
            <person name="Kyrpides N."/>
            <person name="Mikhailova N."/>
            <person name="Bennet G."/>
            <person name="Cann I."/>
            <person name="Chen J.-S."/>
            <person name="Contreras A.L."/>
            <person name="Jones D."/>
            <person name="Kashket E."/>
            <person name="Mitchell W."/>
            <person name="Stoddard S."/>
            <person name="Schwarz W."/>
            <person name="Qureshi N."/>
            <person name="Young M."/>
            <person name="Shi Z."/>
            <person name="Ezeji T."/>
            <person name="White B."/>
            <person name="Blaschek H."/>
            <person name="Richardson P."/>
        </authorList>
    </citation>
    <scope>NUCLEOTIDE SEQUENCE [LARGE SCALE GENOMIC DNA]</scope>
    <source>
        <strain>ATCC 51743 / NCIMB 8052</strain>
    </source>
</reference>
<keyword id="KW-0067">ATP-binding</keyword>
<keyword id="KW-0418">Kinase</keyword>
<keyword id="KW-0547">Nucleotide-binding</keyword>
<keyword id="KW-0723">Serine/threonine-protein kinase</keyword>
<keyword id="KW-0749">Sporulation</keyword>
<keyword id="KW-0808">Transferase</keyword>
<sequence length="143" mass="15747">MSDNKMSIEFVSKSENEAFARVAVAAFVAQLDPTIDEINDVKTAVSEAVTNSIIHGYENREDGLVRIEAEINEDQVTIAIIDKGIGIDNIEQAMEPLYTSRPDLERSGMGFTVMETFMDALEVDSEKGNGTKVVIKKKFNVVS</sequence>
<protein>
    <recommendedName>
        <fullName evidence="1">Anti-sigma F factor</fullName>
        <ecNumber evidence="1">2.7.11.1</ecNumber>
    </recommendedName>
    <alternativeName>
        <fullName evidence="1">Stage II sporulation protein AB</fullName>
    </alternativeName>
</protein>
<accession>A6LRL7</accession>
<feature type="chain" id="PRO_1000130807" description="Anti-sigma F factor">
    <location>
        <begin position="1"/>
        <end position="143"/>
    </location>
</feature>
<comment type="function">
    <text evidence="1">Binds to sigma F and blocks its ability to form an RNA polymerase holoenzyme (E-sigma F). Phosphorylates SpoIIAA on a serine residue. This phosphorylation may enable SpoIIAA to act as an anti-anti-sigma factor that counteracts SpoIIAB and thus releases sigma F from inhibition.</text>
</comment>
<comment type="catalytic activity">
    <reaction evidence="1">
        <text>L-seryl-[protein] + ATP = O-phospho-L-seryl-[protein] + ADP + H(+)</text>
        <dbReference type="Rhea" id="RHEA:17989"/>
        <dbReference type="Rhea" id="RHEA-COMP:9863"/>
        <dbReference type="Rhea" id="RHEA-COMP:11604"/>
        <dbReference type="ChEBI" id="CHEBI:15378"/>
        <dbReference type="ChEBI" id="CHEBI:29999"/>
        <dbReference type="ChEBI" id="CHEBI:30616"/>
        <dbReference type="ChEBI" id="CHEBI:83421"/>
        <dbReference type="ChEBI" id="CHEBI:456216"/>
        <dbReference type="EC" id="2.7.11.1"/>
    </reaction>
</comment>
<comment type="catalytic activity">
    <reaction evidence="1">
        <text>L-threonyl-[protein] + ATP = O-phospho-L-threonyl-[protein] + ADP + H(+)</text>
        <dbReference type="Rhea" id="RHEA:46608"/>
        <dbReference type="Rhea" id="RHEA-COMP:11060"/>
        <dbReference type="Rhea" id="RHEA-COMP:11605"/>
        <dbReference type="ChEBI" id="CHEBI:15378"/>
        <dbReference type="ChEBI" id="CHEBI:30013"/>
        <dbReference type="ChEBI" id="CHEBI:30616"/>
        <dbReference type="ChEBI" id="CHEBI:61977"/>
        <dbReference type="ChEBI" id="CHEBI:456216"/>
        <dbReference type="EC" id="2.7.11.1"/>
    </reaction>
</comment>
<comment type="similarity">
    <text evidence="1">Belongs to the anti-sigma-factor family.</text>
</comment>